<feature type="chain" id="PRO_0000317554" description="Protein DBF4 homolog B">
    <location>
        <begin position="1"/>
        <end position="784"/>
    </location>
</feature>
<feature type="domain" description="BRCT">
    <location>
        <begin position="27"/>
        <end position="117"/>
    </location>
</feature>
<feature type="zinc finger region" description="DBF4-type" evidence="1">
    <location>
        <begin position="244"/>
        <end position="293"/>
    </location>
</feature>
<feature type="region of interest" description="Disordered" evidence="2">
    <location>
        <begin position="222"/>
        <end position="243"/>
    </location>
</feature>
<feature type="region of interest" description="Disordered" evidence="2">
    <location>
        <begin position="299"/>
        <end position="332"/>
    </location>
</feature>
<feature type="region of interest" description="Disordered" evidence="2">
    <location>
        <begin position="348"/>
        <end position="368"/>
    </location>
</feature>
<feature type="region of interest" description="Disordered" evidence="2">
    <location>
        <begin position="495"/>
        <end position="529"/>
    </location>
</feature>
<feature type="compositionally biased region" description="Polar residues" evidence="2">
    <location>
        <begin position="498"/>
        <end position="507"/>
    </location>
</feature>
<feature type="binding site" evidence="1">
    <location>
        <position position="251"/>
    </location>
    <ligand>
        <name>Zn(2+)</name>
        <dbReference type="ChEBI" id="CHEBI:29105"/>
    </ligand>
</feature>
<feature type="binding site" evidence="1">
    <location>
        <position position="254"/>
    </location>
    <ligand>
        <name>Zn(2+)</name>
        <dbReference type="ChEBI" id="CHEBI:29105"/>
    </ligand>
</feature>
<feature type="binding site" evidence="1">
    <location>
        <position position="264"/>
    </location>
    <ligand>
        <name>Zn(2+)</name>
        <dbReference type="ChEBI" id="CHEBI:29105"/>
    </ligand>
</feature>
<feature type="binding site" evidence="1">
    <location>
        <position position="270"/>
    </location>
    <ligand>
        <name>Zn(2+)</name>
        <dbReference type="ChEBI" id="CHEBI:29105"/>
    </ligand>
</feature>
<feature type="sequence conflict" description="In Ref. 2; AAQ19270." evidence="6" ref="2">
    <original>R</original>
    <variation>S</variation>
    <location>
        <position position="149"/>
    </location>
</feature>
<feature type="sequence conflict" description="In Ref. 2; AAQ19270." evidence="6" ref="2">
    <original>K</original>
    <variation>M</variation>
    <location>
        <position position="345"/>
    </location>
</feature>
<feature type="sequence conflict" description="In Ref. 2; AAQ19270." evidence="6" ref="2">
    <original>E</original>
    <variation>G</variation>
    <location>
        <position position="367"/>
    </location>
</feature>
<feature type="sequence conflict" description="In Ref. 2; AAQ19270." evidence="6" ref="2">
    <original>Q</original>
    <variation>E</variation>
    <location>
        <position position="527"/>
    </location>
</feature>
<feature type="sequence conflict" description="In Ref. 2; AAQ19270." evidence="6" ref="2">
    <original>R</original>
    <variation>S</variation>
    <location>
        <position position="548"/>
    </location>
</feature>
<feature type="sequence conflict" description="In Ref. 2; AAQ19270." evidence="6" ref="2">
    <original>C</original>
    <variation>V</variation>
    <location>
        <position position="564"/>
    </location>
</feature>
<feature type="sequence conflict" description="In Ref. 2; AAQ19270." evidence="6" ref="2">
    <original>K</original>
    <variation>R</variation>
    <location>
        <position position="668"/>
    </location>
</feature>
<sequence length="784" mass="85981">MASVISVLHGQVMQQDDEPPLAKRRRCREITFAGKSFYLDVPANRQTQLLTKAIGRLGGIIESFLSRDVDYVVTGSKKAVASVSSVATRRGEKSQIQAAERKEPIHCSRGKQLLKKVVHSQECNSVLTNARSWGVTVLYVEDVVSYIERLERPPSRGIQNKTAEGRAADSTRPSLKIARLRSPFIKIEDQSRKFRPLQCTFTSFPELSFVCSDKSPFETVQTVKKKDPGDQEEEEGQRSQKPQARKRKGYCECCEETFDTLSEHLVGEHHFRFVSNPLSYKMIDDLAAQLTCDLMELPFGSPTSPEAERSSQNEDWDLDLAPGEAEPAGNEGHELGILKATRLDKDGHADCEDQGAPAYLRDGGAEEPDQRCGEIPLANIEVDVYNVCSFDQPVVTCTMELPDVSAEGKIHSNLLGSTVGDERVLQRTNGTCEPHIDLALGNGRELKHAELQKDPLTKDSQPELLSTAHEQLPTSAPCMLLEGASVVHFPSHGGTVGSQGDVTSHSAANKPHTENCPVDSTGDRHAQPAGSDALAMSCVIPTLDNGGRHVDATMQSHWEVPLGCTTDTLLSYSTTVTVGELGPEAHNPTPEQQPLLISTCSSITTVCCTDTEFKSCTVSVHSTSHSPPNQNVKSNQTPSLLEMDLANPNCHRAKRKHWDSLLSPPGKKPTSPSHCQSLTLPMWLLCQFPNYGQQVQLPVWADLCKWDGTAAAEEGTVDCSSSSTLPKLHQDSFSSESDWDAHLPSFFQNNPQQSLQCGDLRTAQVTLNESWYGKQLCNILTHDP</sequence>
<comment type="function">
    <text evidence="3 4 5">Regulatory subunit for cdc7 which activates its kinase activity thereby playing a central role in DNA replication and cell proliferation. Specifically required during the initiation of DNA replication in egg and during early embryonic development. The complex cdc7-dbf4b phosphorylates mcm2 and mcm4 subunits and is required for cdc45 loading.</text>
</comment>
<comment type="subunit">
    <text>Forms a complex with cdc7.</text>
</comment>
<comment type="subcellular location">
    <subcellularLocation>
        <location evidence="4">Nucleus</location>
    </subcellularLocation>
    <text>Binding of complex to chromatin is dependent on pre-replication complex assembly but is not regulated by ATR checkpoint pathways.</text>
</comment>
<comment type="developmental stage">
    <text evidence="4 5">Present early in development. During oogenesis and maturation, low levels are detected in growing oocyte stages V-VI. Expression increases significantly during oocyte maturation. After fertilization, the level decreases slowly until the mid-blastula transition (MBT, stage 8.5). A sharper decrease occurs after MBT. Not detected in embryos past stage 10 of development (at protein level).</text>
</comment>
<comment type="PTM">
    <text evidence="4 5">Phosphorylated. Stably phosphorylated throughout the cell cycle.</text>
</comment>
<dbReference type="EMBL" id="DQ205095">
    <property type="protein sequence ID" value="ABB16337.1"/>
    <property type="molecule type" value="mRNA"/>
</dbReference>
<dbReference type="EMBL" id="AY328889">
    <property type="protein sequence ID" value="AAQ19270.1"/>
    <property type="molecule type" value="mRNA"/>
</dbReference>
<dbReference type="RefSeq" id="NP_001082740.1">
    <property type="nucleotide sequence ID" value="NM_001089271.1"/>
</dbReference>
<dbReference type="BioGRID" id="100026">
    <property type="interactions" value="4"/>
</dbReference>
<dbReference type="GeneID" id="398696"/>
<dbReference type="KEGG" id="xla:398696"/>
<dbReference type="AGR" id="Xenbase:XB-GENE-5829790"/>
<dbReference type="CTD" id="398696"/>
<dbReference type="Xenbase" id="XB-GENE-5829790">
    <property type="gene designation" value="dbf4b.L"/>
</dbReference>
<dbReference type="OrthoDB" id="21380at2759"/>
<dbReference type="Proteomes" id="UP000186698">
    <property type="component" value="Chromosome 9_10L"/>
</dbReference>
<dbReference type="Bgee" id="398696">
    <property type="expression patterns" value="Expressed in egg cell and 9 other cell types or tissues"/>
</dbReference>
<dbReference type="GO" id="GO:0031431">
    <property type="term" value="C:Dbf4-dependent protein kinase complex"/>
    <property type="evidence" value="ECO:0000318"/>
    <property type="project" value="GO_Central"/>
</dbReference>
<dbReference type="GO" id="GO:0003676">
    <property type="term" value="F:nucleic acid binding"/>
    <property type="evidence" value="ECO:0007669"/>
    <property type="project" value="InterPro"/>
</dbReference>
<dbReference type="GO" id="GO:0043539">
    <property type="term" value="F:protein serine/threonine kinase activator activity"/>
    <property type="evidence" value="ECO:0000318"/>
    <property type="project" value="GO_Central"/>
</dbReference>
<dbReference type="GO" id="GO:0008270">
    <property type="term" value="F:zinc ion binding"/>
    <property type="evidence" value="ECO:0007669"/>
    <property type="project" value="UniProtKB-KW"/>
</dbReference>
<dbReference type="GO" id="GO:0010571">
    <property type="term" value="P:positive regulation of nuclear cell cycle DNA replication"/>
    <property type="evidence" value="ECO:0000318"/>
    <property type="project" value="GO_Central"/>
</dbReference>
<dbReference type="GO" id="GO:1901987">
    <property type="term" value="P:regulation of cell cycle phase transition"/>
    <property type="evidence" value="ECO:0000318"/>
    <property type="project" value="GO_Central"/>
</dbReference>
<dbReference type="FunFam" id="6.10.250.3410:FF:000001">
    <property type="entry name" value="Protein DBF4 homolog A"/>
    <property type="match status" value="1"/>
</dbReference>
<dbReference type="Gene3D" id="6.10.250.3410">
    <property type="entry name" value="DBF zinc finger"/>
    <property type="match status" value="1"/>
</dbReference>
<dbReference type="InterPro" id="IPR051590">
    <property type="entry name" value="Replication_Regulatory_Kinase"/>
</dbReference>
<dbReference type="InterPro" id="IPR006572">
    <property type="entry name" value="Znf_DBF"/>
</dbReference>
<dbReference type="InterPro" id="IPR038545">
    <property type="entry name" value="Znf_DBF_sf"/>
</dbReference>
<dbReference type="PANTHER" id="PTHR15375">
    <property type="entry name" value="ACTIVATOR OF S-PHASE KINASE-RELATED"/>
    <property type="match status" value="1"/>
</dbReference>
<dbReference type="PANTHER" id="PTHR15375:SF24">
    <property type="entry name" value="PROTEIN DBF4 HOMOLOG B"/>
    <property type="match status" value="1"/>
</dbReference>
<dbReference type="Pfam" id="PF07535">
    <property type="entry name" value="zf-DBF"/>
    <property type="match status" value="1"/>
</dbReference>
<dbReference type="SMART" id="SM00586">
    <property type="entry name" value="ZnF_DBF"/>
    <property type="match status" value="1"/>
</dbReference>
<dbReference type="PROSITE" id="PS51265">
    <property type="entry name" value="ZF_DBF4"/>
    <property type="match status" value="1"/>
</dbReference>
<evidence type="ECO:0000255" key="1">
    <source>
        <dbReference type="PROSITE-ProRule" id="PRU00600"/>
    </source>
</evidence>
<evidence type="ECO:0000256" key="2">
    <source>
        <dbReference type="SAM" id="MobiDB-lite"/>
    </source>
</evidence>
<evidence type="ECO:0000269" key="3">
    <source>
    </source>
</evidence>
<evidence type="ECO:0000269" key="4">
    <source>
    </source>
</evidence>
<evidence type="ECO:0000269" key="5">
    <source>
    </source>
</evidence>
<evidence type="ECO:0000305" key="6"/>
<organism>
    <name type="scientific">Xenopus laevis</name>
    <name type="common">African clawed frog</name>
    <dbReference type="NCBI Taxonomy" id="8355"/>
    <lineage>
        <taxon>Eukaryota</taxon>
        <taxon>Metazoa</taxon>
        <taxon>Chordata</taxon>
        <taxon>Craniata</taxon>
        <taxon>Vertebrata</taxon>
        <taxon>Euteleostomi</taxon>
        <taxon>Amphibia</taxon>
        <taxon>Batrachia</taxon>
        <taxon>Anura</taxon>
        <taxon>Pipoidea</taxon>
        <taxon>Pipidae</taxon>
        <taxon>Xenopodinae</taxon>
        <taxon>Xenopus</taxon>
        <taxon>Xenopus</taxon>
    </lineage>
</organism>
<reference key="1">
    <citation type="journal article" date="2006" name="J. Biol. Chem.">
        <title>Xenopus CDC7/DRF1 complex is required for the initiation of DNA replication.</title>
        <authorList>
            <person name="Silva T."/>
            <person name="Bradley R.H."/>
            <person name="Gao Y."/>
            <person name="Coue M."/>
        </authorList>
    </citation>
    <scope>NUCLEOTIDE SEQUENCE [MRNA]</scope>
    <scope>FUNCTION</scope>
    <scope>PHOSPHORYLATION</scope>
    <scope>DEVELOPMENTAL STAGE</scope>
    <scope>INTERACTION WITH CDC7</scope>
</reference>
<reference key="2">
    <citation type="journal article" date="2003" name="J. Biol. Chem.">
        <title>Xenopus Drf1, a regulator of Cdc7, displays checkpoint-dependent accumulation on chromatin during an S-phase arrest.</title>
        <authorList>
            <person name="Yanow S.K."/>
            <person name="Gold D.A."/>
            <person name="Yoo H.Y."/>
            <person name="Dunphy W.G."/>
        </authorList>
    </citation>
    <scope>NUCLEOTIDE SEQUENCE [MRNA] OF 13-784</scope>
    <scope>FUNCTION</scope>
    <scope>INTERACTION WITH CDC7</scope>
</reference>
<reference key="3">
    <citation type="journal article" date="2005" name="Genes Dev.">
        <title>Cdc7-Drf1 is a developmentally regulated protein kinase required for the initiation of vertebrate DNA replication.</title>
        <authorList>
            <person name="Takahashi T.S."/>
            <person name="Walter J.C."/>
        </authorList>
    </citation>
    <scope>FUNCTION</scope>
    <scope>SUBCELLULAR LOCATION</scope>
    <scope>PHOSPHORYLATION</scope>
    <scope>DEVELOPMENTAL STAGE</scope>
    <scope>INTERACTION WITH CDC7</scope>
</reference>
<protein>
    <recommendedName>
        <fullName>Protein DBF4 homolog B</fullName>
    </recommendedName>
    <alternativeName>
        <fullName>Dbf4-related factor 1</fullName>
    </alternativeName>
    <alternativeName>
        <fullName>XDrf1</fullName>
    </alternativeName>
</protein>
<keyword id="KW-0131">Cell cycle</keyword>
<keyword id="KW-0217">Developmental protein</keyword>
<keyword id="KW-0479">Metal-binding</keyword>
<keyword id="KW-0539">Nucleus</keyword>
<keyword id="KW-0597">Phosphoprotein</keyword>
<keyword id="KW-1185">Reference proteome</keyword>
<keyword id="KW-0862">Zinc</keyword>
<keyword id="KW-0863">Zinc-finger</keyword>
<accession>Q283Q6</accession>
<accession>Q7SZM4</accession>
<proteinExistence type="evidence at protein level"/>
<gene>
    <name type="primary">dbf4b</name>
    <name type="synonym">drf1</name>
</gene>
<name>DBF4B_XENLA</name>